<keyword id="KW-0687">Ribonucleoprotein</keyword>
<keyword id="KW-0689">Ribosomal protein</keyword>
<keyword id="KW-0694">RNA-binding</keyword>
<keyword id="KW-0699">rRNA-binding</keyword>
<sequence>MSLSTEAKAKILADFGRCENDTGSTEVQVALLTAQINHLQAHFKEHIHDHHSRRGLLRMVSSRRKLTAYLKRTDLARYTALIQKLGLRR</sequence>
<reference key="1">
    <citation type="submission" date="2007-07" db="EMBL/GenBank/DDBJ databases">
        <title>Complete sequence of chromosome of Shewanella baltica OS185.</title>
        <authorList>
            <consortium name="US DOE Joint Genome Institute"/>
            <person name="Copeland A."/>
            <person name="Lucas S."/>
            <person name="Lapidus A."/>
            <person name="Barry K."/>
            <person name="Glavina del Rio T."/>
            <person name="Dalin E."/>
            <person name="Tice H."/>
            <person name="Pitluck S."/>
            <person name="Sims D."/>
            <person name="Brettin T."/>
            <person name="Bruce D."/>
            <person name="Detter J.C."/>
            <person name="Han C."/>
            <person name="Schmutz J."/>
            <person name="Larimer F."/>
            <person name="Land M."/>
            <person name="Hauser L."/>
            <person name="Kyrpides N."/>
            <person name="Mikhailova N."/>
            <person name="Brettar I."/>
            <person name="Rodrigues J."/>
            <person name="Konstantinidis K."/>
            <person name="Tiedje J."/>
            <person name="Richardson P."/>
        </authorList>
    </citation>
    <scope>NUCLEOTIDE SEQUENCE [LARGE SCALE GENOMIC DNA]</scope>
    <source>
        <strain>OS185</strain>
    </source>
</reference>
<protein>
    <recommendedName>
        <fullName evidence="1">Small ribosomal subunit protein uS15</fullName>
    </recommendedName>
    <alternativeName>
        <fullName evidence="2">30S ribosomal protein S15</fullName>
    </alternativeName>
</protein>
<accession>A6WRG5</accession>
<feature type="chain" id="PRO_1000054866" description="Small ribosomal subunit protein uS15">
    <location>
        <begin position="1"/>
        <end position="89"/>
    </location>
</feature>
<proteinExistence type="inferred from homology"/>
<organism>
    <name type="scientific">Shewanella baltica (strain OS185)</name>
    <dbReference type="NCBI Taxonomy" id="402882"/>
    <lineage>
        <taxon>Bacteria</taxon>
        <taxon>Pseudomonadati</taxon>
        <taxon>Pseudomonadota</taxon>
        <taxon>Gammaproteobacteria</taxon>
        <taxon>Alteromonadales</taxon>
        <taxon>Shewanellaceae</taxon>
        <taxon>Shewanella</taxon>
    </lineage>
</organism>
<name>RS15_SHEB8</name>
<gene>
    <name evidence="1" type="primary">rpsO</name>
    <name type="ordered locus">Shew185_3277</name>
</gene>
<dbReference type="EMBL" id="CP000753">
    <property type="protein sequence ID" value="ABS09404.1"/>
    <property type="molecule type" value="Genomic_DNA"/>
</dbReference>
<dbReference type="RefSeq" id="WP_012089921.1">
    <property type="nucleotide sequence ID" value="NC_009665.1"/>
</dbReference>
<dbReference type="SMR" id="A6WRG5"/>
<dbReference type="KEGG" id="sbm:Shew185_3277"/>
<dbReference type="HOGENOM" id="CLU_148518_0_0_6"/>
<dbReference type="GO" id="GO:0022627">
    <property type="term" value="C:cytosolic small ribosomal subunit"/>
    <property type="evidence" value="ECO:0007669"/>
    <property type="project" value="TreeGrafter"/>
</dbReference>
<dbReference type="GO" id="GO:0019843">
    <property type="term" value="F:rRNA binding"/>
    <property type="evidence" value="ECO:0007669"/>
    <property type="project" value="UniProtKB-UniRule"/>
</dbReference>
<dbReference type="GO" id="GO:0003735">
    <property type="term" value="F:structural constituent of ribosome"/>
    <property type="evidence" value="ECO:0007669"/>
    <property type="project" value="InterPro"/>
</dbReference>
<dbReference type="GO" id="GO:0006412">
    <property type="term" value="P:translation"/>
    <property type="evidence" value="ECO:0007669"/>
    <property type="project" value="UniProtKB-UniRule"/>
</dbReference>
<dbReference type="CDD" id="cd00353">
    <property type="entry name" value="Ribosomal_S15p_S13e"/>
    <property type="match status" value="1"/>
</dbReference>
<dbReference type="FunFam" id="1.10.287.10:FF:000002">
    <property type="entry name" value="30S ribosomal protein S15"/>
    <property type="match status" value="1"/>
</dbReference>
<dbReference type="Gene3D" id="6.10.250.3130">
    <property type="match status" value="1"/>
</dbReference>
<dbReference type="Gene3D" id="1.10.287.10">
    <property type="entry name" value="S15/NS1, RNA-binding"/>
    <property type="match status" value="1"/>
</dbReference>
<dbReference type="HAMAP" id="MF_01343_B">
    <property type="entry name" value="Ribosomal_uS15_B"/>
    <property type="match status" value="1"/>
</dbReference>
<dbReference type="InterPro" id="IPR000589">
    <property type="entry name" value="Ribosomal_uS15"/>
</dbReference>
<dbReference type="InterPro" id="IPR005290">
    <property type="entry name" value="Ribosomal_uS15_bac-type"/>
</dbReference>
<dbReference type="InterPro" id="IPR009068">
    <property type="entry name" value="uS15_NS1_RNA-bd_sf"/>
</dbReference>
<dbReference type="NCBIfam" id="TIGR00952">
    <property type="entry name" value="S15_bact"/>
    <property type="match status" value="1"/>
</dbReference>
<dbReference type="PANTHER" id="PTHR23321">
    <property type="entry name" value="RIBOSOMAL PROTEIN S15, BACTERIAL AND ORGANELLAR"/>
    <property type="match status" value="1"/>
</dbReference>
<dbReference type="PANTHER" id="PTHR23321:SF26">
    <property type="entry name" value="SMALL RIBOSOMAL SUBUNIT PROTEIN US15M"/>
    <property type="match status" value="1"/>
</dbReference>
<dbReference type="Pfam" id="PF00312">
    <property type="entry name" value="Ribosomal_S15"/>
    <property type="match status" value="1"/>
</dbReference>
<dbReference type="SMART" id="SM01387">
    <property type="entry name" value="Ribosomal_S15"/>
    <property type="match status" value="1"/>
</dbReference>
<dbReference type="SUPFAM" id="SSF47060">
    <property type="entry name" value="S15/NS1 RNA-binding domain"/>
    <property type="match status" value="1"/>
</dbReference>
<dbReference type="PROSITE" id="PS00362">
    <property type="entry name" value="RIBOSOMAL_S15"/>
    <property type="match status" value="1"/>
</dbReference>
<comment type="function">
    <text evidence="1">One of the primary rRNA binding proteins, it binds directly to 16S rRNA where it helps nucleate assembly of the platform of the 30S subunit by binding and bridging several RNA helices of the 16S rRNA.</text>
</comment>
<comment type="function">
    <text evidence="1">Forms an intersubunit bridge (bridge B4) with the 23S rRNA of the 50S subunit in the ribosome.</text>
</comment>
<comment type="subunit">
    <text evidence="1">Part of the 30S ribosomal subunit. Forms a bridge to the 50S subunit in the 70S ribosome, contacting the 23S rRNA.</text>
</comment>
<comment type="similarity">
    <text evidence="1">Belongs to the universal ribosomal protein uS15 family.</text>
</comment>
<evidence type="ECO:0000255" key="1">
    <source>
        <dbReference type="HAMAP-Rule" id="MF_01343"/>
    </source>
</evidence>
<evidence type="ECO:0000305" key="2"/>